<reference key="1">
    <citation type="journal article" date="2007" name="PLoS Genet.">
        <title>Patterns and implications of gene gain and loss in the evolution of Prochlorococcus.</title>
        <authorList>
            <person name="Kettler G.C."/>
            <person name="Martiny A.C."/>
            <person name="Huang K."/>
            <person name="Zucker J."/>
            <person name="Coleman M.L."/>
            <person name="Rodrigue S."/>
            <person name="Chen F."/>
            <person name="Lapidus A."/>
            <person name="Ferriera S."/>
            <person name="Johnson J."/>
            <person name="Steglich C."/>
            <person name="Church G.M."/>
            <person name="Richardson P."/>
            <person name="Chisholm S.W."/>
        </authorList>
    </citation>
    <scope>NUCLEOTIDE SEQUENCE [LARGE SCALE GENOMIC DNA]</scope>
    <source>
        <strain>MIT 9303</strain>
    </source>
</reference>
<organism>
    <name type="scientific">Prochlorococcus marinus (strain MIT 9303)</name>
    <dbReference type="NCBI Taxonomy" id="59922"/>
    <lineage>
        <taxon>Bacteria</taxon>
        <taxon>Bacillati</taxon>
        <taxon>Cyanobacteriota</taxon>
        <taxon>Cyanophyceae</taxon>
        <taxon>Synechococcales</taxon>
        <taxon>Prochlorococcaceae</taxon>
        <taxon>Prochlorococcus</taxon>
    </lineage>
</organism>
<accession>A2C5M1</accession>
<evidence type="ECO:0000255" key="1">
    <source>
        <dbReference type="HAMAP-Rule" id="MF_00274"/>
    </source>
</evidence>
<evidence type="ECO:0000256" key="2">
    <source>
        <dbReference type="SAM" id="MobiDB-lite"/>
    </source>
</evidence>
<sequence length="113" mass="12278">MAGFGLPNFGQLTEAFRKAQQIQQNAQKLQEELDAMEIEGSSPDGRASIWLSGNQQPLRVRLEPSLLAEGQDASETAILAALQSAYEHSTTTMKEQMEELTGGLNLNLPGMSD</sequence>
<keyword id="KW-0963">Cytoplasm</keyword>
<keyword id="KW-0238">DNA-binding</keyword>
<dbReference type="EMBL" id="CP000554">
    <property type="protein sequence ID" value="ABM76781.1"/>
    <property type="molecule type" value="Genomic_DNA"/>
</dbReference>
<dbReference type="RefSeq" id="WP_011824714.1">
    <property type="nucleotide sequence ID" value="NC_008820.1"/>
</dbReference>
<dbReference type="SMR" id="A2C5M1"/>
<dbReference type="STRING" id="59922.P9303_00241"/>
<dbReference type="KEGG" id="pmf:P9303_00241"/>
<dbReference type="HOGENOM" id="CLU_140930_0_1_3"/>
<dbReference type="BioCyc" id="PMAR59922:G1G80-25-MONOMER"/>
<dbReference type="Proteomes" id="UP000002274">
    <property type="component" value="Chromosome"/>
</dbReference>
<dbReference type="GO" id="GO:0043590">
    <property type="term" value="C:bacterial nucleoid"/>
    <property type="evidence" value="ECO:0007669"/>
    <property type="project" value="UniProtKB-UniRule"/>
</dbReference>
<dbReference type="GO" id="GO:0005829">
    <property type="term" value="C:cytosol"/>
    <property type="evidence" value="ECO:0007669"/>
    <property type="project" value="TreeGrafter"/>
</dbReference>
<dbReference type="GO" id="GO:0003677">
    <property type="term" value="F:DNA binding"/>
    <property type="evidence" value="ECO:0007669"/>
    <property type="project" value="UniProtKB-UniRule"/>
</dbReference>
<dbReference type="Gene3D" id="3.30.1310.10">
    <property type="entry name" value="Nucleoid-associated protein YbaB-like domain"/>
    <property type="match status" value="1"/>
</dbReference>
<dbReference type="HAMAP" id="MF_00274">
    <property type="entry name" value="DNA_YbaB_EbfC"/>
    <property type="match status" value="1"/>
</dbReference>
<dbReference type="InterPro" id="IPR036894">
    <property type="entry name" value="YbaB-like_sf"/>
</dbReference>
<dbReference type="InterPro" id="IPR004401">
    <property type="entry name" value="YbaB/EbfC"/>
</dbReference>
<dbReference type="NCBIfam" id="TIGR00103">
    <property type="entry name" value="DNA_YbaB_EbfC"/>
    <property type="match status" value="1"/>
</dbReference>
<dbReference type="PANTHER" id="PTHR33449">
    <property type="entry name" value="NUCLEOID-ASSOCIATED PROTEIN YBAB"/>
    <property type="match status" value="1"/>
</dbReference>
<dbReference type="PANTHER" id="PTHR33449:SF1">
    <property type="entry name" value="NUCLEOID-ASSOCIATED PROTEIN YBAB"/>
    <property type="match status" value="1"/>
</dbReference>
<dbReference type="Pfam" id="PF02575">
    <property type="entry name" value="YbaB_DNA_bd"/>
    <property type="match status" value="1"/>
</dbReference>
<dbReference type="PIRSF" id="PIRSF004555">
    <property type="entry name" value="UCP004555"/>
    <property type="match status" value="1"/>
</dbReference>
<dbReference type="SUPFAM" id="SSF82607">
    <property type="entry name" value="YbaB-like"/>
    <property type="match status" value="1"/>
</dbReference>
<protein>
    <recommendedName>
        <fullName evidence="1">Nucleoid-associated protein P9303_00241</fullName>
    </recommendedName>
</protein>
<feature type="chain" id="PRO_1000003794" description="Nucleoid-associated protein P9303_00241">
    <location>
        <begin position="1"/>
        <end position="113"/>
    </location>
</feature>
<feature type="region of interest" description="Disordered" evidence="2">
    <location>
        <begin position="90"/>
        <end position="113"/>
    </location>
</feature>
<proteinExistence type="inferred from homology"/>
<gene>
    <name type="ordered locus">P9303_00241</name>
</gene>
<name>Y024_PROM3</name>
<comment type="function">
    <text evidence="1">Binds to DNA and alters its conformation. May be involved in regulation of gene expression, nucleoid organization and DNA protection.</text>
</comment>
<comment type="subunit">
    <text evidence="1">Homodimer.</text>
</comment>
<comment type="subcellular location">
    <subcellularLocation>
        <location evidence="1">Cytoplasm</location>
        <location evidence="1">Nucleoid</location>
    </subcellularLocation>
</comment>
<comment type="similarity">
    <text evidence="1">Belongs to the YbaB/EbfC family.</text>
</comment>